<comment type="function">
    <text evidence="1">Together with LptE, is involved in the assembly of lipopolysaccharide (LPS) at the surface of the outer membrane.</text>
</comment>
<comment type="subunit">
    <text evidence="1">Component of the lipopolysaccharide transport and assembly complex. Interacts with LptE and LptA.</text>
</comment>
<comment type="subcellular location">
    <subcellularLocation>
        <location evidence="1">Cell outer membrane</location>
    </subcellularLocation>
</comment>
<comment type="similarity">
    <text evidence="1">Belongs to the LptD family.</text>
</comment>
<dbReference type="EMBL" id="CP000446">
    <property type="protein sequence ID" value="ABI37988.1"/>
    <property type="molecule type" value="Genomic_DNA"/>
</dbReference>
<dbReference type="RefSeq" id="WP_011621703.1">
    <property type="nucleotide sequence ID" value="NC_008321.1"/>
</dbReference>
<dbReference type="SMR" id="Q0HLS9"/>
<dbReference type="KEGG" id="she:Shewmr4_0908"/>
<dbReference type="HOGENOM" id="CLU_009039_2_0_6"/>
<dbReference type="GO" id="GO:0009279">
    <property type="term" value="C:cell outer membrane"/>
    <property type="evidence" value="ECO:0007669"/>
    <property type="project" value="UniProtKB-SubCell"/>
</dbReference>
<dbReference type="GO" id="GO:1990351">
    <property type="term" value="C:transporter complex"/>
    <property type="evidence" value="ECO:0007669"/>
    <property type="project" value="TreeGrafter"/>
</dbReference>
<dbReference type="GO" id="GO:0043165">
    <property type="term" value="P:Gram-negative-bacterium-type cell outer membrane assembly"/>
    <property type="evidence" value="ECO:0007669"/>
    <property type="project" value="UniProtKB-UniRule"/>
</dbReference>
<dbReference type="GO" id="GO:0015920">
    <property type="term" value="P:lipopolysaccharide transport"/>
    <property type="evidence" value="ECO:0007669"/>
    <property type="project" value="InterPro"/>
</dbReference>
<dbReference type="Gene3D" id="2.60.450.10">
    <property type="entry name" value="Lipopolysaccharide (LPS) transport protein A like domain"/>
    <property type="match status" value="1"/>
</dbReference>
<dbReference type="HAMAP" id="MF_01411">
    <property type="entry name" value="LPS_assembly_LptD"/>
    <property type="match status" value="1"/>
</dbReference>
<dbReference type="InterPro" id="IPR020889">
    <property type="entry name" value="LipoPS_assembly_LptD"/>
</dbReference>
<dbReference type="InterPro" id="IPR050218">
    <property type="entry name" value="LptD"/>
</dbReference>
<dbReference type="InterPro" id="IPR007543">
    <property type="entry name" value="LptD_C"/>
</dbReference>
<dbReference type="InterPro" id="IPR005653">
    <property type="entry name" value="OstA-like_N"/>
</dbReference>
<dbReference type="NCBIfam" id="NF002997">
    <property type="entry name" value="PRK03761.1"/>
    <property type="match status" value="1"/>
</dbReference>
<dbReference type="PANTHER" id="PTHR30189">
    <property type="entry name" value="LPS-ASSEMBLY PROTEIN"/>
    <property type="match status" value="1"/>
</dbReference>
<dbReference type="PANTHER" id="PTHR30189:SF1">
    <property type="entry name" value="LPS-ASSEMBLY PROTEIN LPTD"/>
    <property type="match status" value="1"/>
</dbReference>
<dbReference type="Pfam" id="PF04453">
    <property type="entry name" value="LptD"/>
    <property type="match status" value="1"/>
</dbReference>
<dbReference type="Pfam" id="PF03968">
    <property type="entry name" value="LptD_N"/>
    <property type="match status" value="1"/>
</dbReference>
<name>LPTD_SHESM</name>
<organism>
    <name type="scientific">Shewanella sp. (strain MR-4)</name>
    <dbReference type="NCBI Taxonomy" id="60480"/>
    <lineage>
        <taxon>Bacteria</taxon>
        <taxon>Pseudomonadati</taxon>
        <taxon>Pseudomonadota</taxon>
        <taxon>Gammaproteobacteria</taxon>
        <taxon>Alteromonadales</taxon>
        <taxon>Shewanellaceae</taxon>
        <taxon>Shewanella</taxon>
    </lineage>
</organism>
<evidence type="ECO:0000255" key="1">
    <source>
        <dbReference type="HAMAP-Rule" id="MF_01411"/>
    </source>
</evidence>
<keyword id="KW-0998">Cell outer membrane</keyword>
<keyword id="KW-0472">Membrane</keyword>
<keyword id="KW-0732">Signal</keyword>
<proteinExistence type="inferred from homology"/>
<sequence>MQIRYFLALSLLPQLVLADESPTASASQCVIEPPVPRIVSQPGLSAADQEKIRIVSDRSNAEMGKQAIFTGDVVFSQGDRHIAADEAILDQATEQFDANGNLVFQDNIFTVTADSLQAQMRSNRATLKGAQYWLHGQQVHGDAEKLQITMNNNLILTNTNFTTCPPDNVSWLLEAEKIKINSEEEWGEIWNAKLRIADIPVFYIPYMTVPVSDKRKTGFLYPSFSTSTTNGFEVSAPYYWNIAPEYDLTFTPNYMSSRGLFTKTEFRYLAGEAQSGRLNLEYLGNDQMLSGSPNRYLYNWQHQGAIDKNWRVLANFTEVSDNNYFNDLKSDVNRATDNQLSRIGEVSYFERNWDISTRVQDIKVLGEDEKPYQVMPQVNFNYRAADFWNNLDFGFNSELTNFAHDDSDMNTATRLHMAPSLTLPIHGPSGSLTSQVKLMQTNYWQEQNNSAFDGLDDTVSRTIPQVRINGQINFERFTELFDQNYRQTLEPQFQYLYVGYEDQRGIGIYDTAQLQDDYFGLFRDRRFSGLDRIADANQVTLGVTTRFFDDHNQEATKFSLGQILYLQDSKLGYEDNLFEQNQSTSVLAAELDTRLSHDWYLGAAIQYDTNSSNNKKTEVTLDFRPEANKLLQLSYRYVPDLLNSNTNDLVNISQAGVRGAWPINDSLYFVGNWYYDLNESRSIETYTGFQYESCCYAIRLSYHYRIKTNYDDNIGSAVIDEREQFESGVYLNLVIKGLGGSGPLGVSDMLNDGLFNYRKPLYLRN</sequence>
<feature type="signal peptide" evidence="1">
    <location>
        <begin position="1"/>
        <end position="18"/>
    </location>
</feature>
<feature type="chain" id="PRO_5000129610" description="LPS-assembly protein LptD">
    <location>
        <begin position="19"/>
        <end position="765"/>
    </location>
</feature>
<protein>
    <recommendedName>
        <fullName evidence="1">LPS-assembly protein LptD</fullName>
    </recommendedName>
</protein>
<accession>Q0HLS9</accession>
<gene>
    <name evidence="1" type="primary">lptD</name>
    <name type="synonym">imp</name>
    <name type="synonym">ostA</name>
    <name type="ordered locus">Shewmr4_0908</name>
</gene>
<reference key="1">
    <citation type="submission" date="2006-08" db="EMBL/GenBank/DDBJ databases">
        <title>Complete sequence of Shewanella sp. MR-4.</title>
        <authorList>
            <consortium name="US DOE Joint Genome Institute"/>
            <person name="Copeland A."/>
            <person name="Lucas S."/>
            <person name="Lapidus A."/>
            <person name="Barry K."/>
            <person name="Detter J.C."/>
            <person name="Glavina del Rio T."/>
            <person name="Hammon N."/>
            <person name="Israni S."/>
            <person name="Dalin E."/>
            <person name="Tice H."/>
            <person name="Pitluck S."/>
            <person name="Kiss H."/>
            <person name="Brettin T."/>
            <person name="Bruce D."/>
            <person name="Han C."/>
            <person name="Tapia R."/>
            <person name="Gilna P."/>
            <person name="Schmutz J."/>
            <person name="Larimer F."/>
            <person name="Land M."/>
            <person name="Hauser L."/>
            <person name="Kyrpides N."/>
            <person name="Mikhailova N."/>
            <person name="Nealson K."/>
            <person name="Konstantinidis K."/>
            <person name="Klappenbach J."/>
            <person name="Tiedje J."/>
            <person name="Richardson P."/>
        </authorList>
    </citation>
    <scope>NUCLEOTIDE SEQUENCE [LARGE SCALE GENOMIC DNA]</scope>
    <source>
        <strain>MR-4</strain>
    </source>
</reference>